<accession>Q3V522</accession>
<comment type="function">
    <text evidence="2">Component of the cytochrome b6-f complex, which mediates electron transfer between photosystem II (PSII) and photosystem I (PSI), cyclic electron flow around PSI, and state transitions.</text>
</comment>
<comment type="cofactor">
    <cofactor evidence="2">
        <name>heme</name>
        <dbReference type="ChEBI" id="CHEBI:30413"/>
    </cofactor>
    <text evidence="2">Binds 1 heme group covalently.</text>
</comment>
<comment type="subunit">
    <text evidence="1">The 4 large subunits of the cytochrome b6-f complex are cytochrome b6, subunit IV (17 kDa polypeptide, petD), cytochrome f and the Rieske protein, while the 4 small subunits are PetG, PetL, PetM and PetN. The complex functions as a dimer (By similarity).</text>
</comment>
<comment type="subcellular location">
    <subcellularLocation>
        <location evidence="2">Plastid</location>
        <location evidence="2">Chloroplast thylakoid membrane</location>
        <topology evidence="2">Single-pass membrane protein</topology>
    </subcellularLocation>
</comment>
<comment type="similarity">
    <text evidence="2">Belongs to the cytochrome f family.</text>
</comment>
<protein>
    <recommendedName>
        <fullName evidence="2">Cytochrome f</fullName>
    </recommendedName>
</protein>
<proteinExistence type="inferred from homology"/>
<gene>
    <name evidence="2" type="primary">petA</name>
</gene>
<dbReference type="EMBL" id="AJ879453">
    <property type="protein sequence ID" value="CAI53806.1"/>
    <property type="molecule type" value="Genomic_DNA"/>
</dbReference>
<dbReference type="RefSeq" id="YP_319777.1">
    <property type="nucleotide sequence ID" value="NC_007407.1"/>
</dbReference>
<dbReference type="SMR" id="Q3V522"/>
<dbReference type="GeneID" id="3677489"/>
<dbReference type="GO" id="GO:0009535">
    <property type="term" value="C:chloroplast thylakoid membrane"/>
    <property type="evidence" value="ECO:0007669"/>
    <property type="project" value="UniProtKB-SubCell"/>
</dbReference>
<dbReference type="GO" id="GO:0009055">
    <property type="term" value="F:electron transfer activity"/>
    <property type="evidence" value="ECO:0007669"/>
    <property type="project" value="UniProtKB-UniRule"/>
</dbReference>
<dbReference type="GO" id="GO:0020037">
    <property type="term" value="F:heme binding"/>
    <property type="evidence" value="ECO:0007669"/>
    <property type="project" value="InterPro"/>
</dbReference>
<dbReference type="GO" id="GO:0005506">
    <property type="term" value="F:iron ion binding"/>
    <property type="evidence" value="ECO:0007669"/>
    <property type="project" value="InterPro"/>
</dbReference>
<dbReference type="GO" id="GO:0015979">
    <property type="term" value="P:photosynthesis"/>
    <property type="evidence" value="ECO:0007669"/>
    <property type="project" value="UniProtKB-UniRule"/>
</dbReference>
<dbReference type="FunFam" id="1.20.5.700:FF:000001">
    <property type="entry name" value="Cytochrome f"/>
    <property type="match status" value="1"/>
</dbReference>
<dbReference type="FunFam" id="2.40.50.100:FF:000007">
    <property type="entry name" value="Cytochrome f"/>
    <property type="match status" value="1"/>
</dbReference>
<dbReference type="FunFam" id="2.60.40.830:FF:000001">
    <property type="entry name" value="Cytochrome f"/>
    <property type="match status" value="1"/>
</dbReference>
<dbReference type="Gene3D" id="2.40.50.100">
    <property type="match status" value="1"/>
</dbReference>
<dbReference type="Gene3D" id="2.60.40.830">
    <property type="entry name" value="Cytochrome f large domain"/>
    <property type="match status" value="1"/>
</dbReference>
<dbReference type="Gene3D" id="1.20.5.700">
    <property type="entry name" value="Single helix bin"/>
    <property type="match status" value="1"/>
</dbReference>
<dbReference type="HAMAP" id="MF_00610">
    <property type="entry name" value="Cytb6_f_cytF"/>
    <property type="match status" value="1"/>
</dbReference>
<dbReference type="InterPro" id="IPR024058">
    <property type="entry name" value="Cyt-f_TM"/>
</dbReference>
<dbReference type="InterPro" id="IPR002325">
    <property type="entry name" value="Cyt_f"/>
</dbReference>
<dbReference type="InterPro" id="IPR024094">
    <property type="entry name" value="Cyt_f_lg_dom"/>
</dbReference>
<dbReference type="InterPro" id="IPR036826">
    <property type="entry name" value="Cyt_f_lg_dom_sf"/>
</dbReference>
<dbReference type="InterPro" id="IPR011054">
    <property type="entry name" value="Rudment_hybrid_motif"/>
</dbReference>
<dbReference type="PANTHER" id="PTHR33288">
    <property type="match status" value="1"/>
</dbReference>
<dbReference type="PANTHER" id="PTHR33288:SF10">
    <property type="entry name" value="CYTOCHROME F"/>
    <property type="match status" value="1"/>
</dbReference>
<dbReference type="Pfam" id="PF01333">
    <property type="entry name" value="Apocytochr_F_C"/>
    <property type="match status" value="1"/>
</dbReference>
<dbReference type="Pfam" id="PF16639">
    <property type="entry name" value="Apocytochr_F_N"/>
    <property type="match status" value="1"/>
</dbReference>
<dbReference type="PRINTS" id="PR00610">
    <property type="entry name" value="CYTOCHROMEF"/>
</dbReference>
<dbReference type="SUPFAM" id="SSF103431">
    <property type="entry name" value="Cytochrome f subunit of the cytochrome b6f complex, transmembrane anchor"/>
    <property type="match status" value="1"/>
</dbReference>
<dbReference type="SUPFAM" id="SSF49441">
    <property type="entry name" value="Cytochrome f, large domain"/>
    <property type="match status" value="1"/>
</dbReference>
<dbReference type="SUPFAM" id="SSF51246">
    <property type="entry name" value="Rudiment single hybrid motif"/>
    <property type="match status" value="1"/>
</dbReference>
<dbReference type="PROSITE" id="PS51010">
    <property type="entry name" value="CYTF"/>
    <property type="match status" value="1"/>
</dbReference>
<name>CYF_ACOCL</name>
<reference key="1">
    <citation type="journal article" date="2005" name="Mol. Biol. Evol.">
        <title>Analysis of Acorus calamus chloroplast genome and its phylogenetic implications.</title>
        <authorList>
            <person name="Goremykin V.V."/>
            <person name="Holland B."/>
            <person name="Hirsch-Ernst K.I."/>
            <person name="Hellwig F.H."/>
        </authorList>
    </citation>
    <scope>NUCLEOTIDE SEQUENCE [LARGE SCALE GENOMIC DNA]</scope>
</reference>
<feature type="signal peptide" evidence="2">
    <location>
        <begin position="1"/>
        <end position="35"/>
    </location>
</feature>
<feature type="chain" id="PRO_0000342043" description="Cytochrome f">
    <location>
        <begin position="36"/>
        <end position="320"/>
    </location>
</feature>
<feature type="transmembrane region" description="Helical" evidence="2">
    <location>
        <begin position="286"/>
        <end position="306"/>
    </location>
</feature>
<feature type="binding site" description="axial binding residue" evidence="2">
    <location>
        <position position="36"/>
    </location>
    <ligand>
        <name>heme</name>
        <dbReference type="ChEBI" id="CHEBI:30413"/>
    </ligand>
    <ligandPart>
        <name>Fe</name>
        <dbReference type="ChEBI" id="CHEBI:18248"/>
    </ligandPart>
</feature>
<feature type="binding site" description="covalent" evidence="2">
    <location>
        <position position="56"/>
    </location>
    <ligand>
        <name>heme</name>
        <dbReference type="ChEBI" id="CHEBI:30413"/>
    </ligand>
</feature>
<feature type="binding site" description="covalent" evidence="2">
    <location>
        <position position="59"/>
    </location>
    <ligand>
        <name>heme</name>
        <dbReference type="ChEBI" id="CHEBI:30413"/>
    </ligand>
</feature>
<feature type="binding site" description="axial binding residue" evidence="2">
    <location>
        <position position="60"/>
    </location>
    <ligand>
        <name>heme</name>
        <dbReference type="ChEBI" id="CHEBI:30413"/>
    </ligand>
    <ligandPart>
        <name>Fe</name>
        <dbReference type="ChEBI" id="CHEBI:18248"/>
    </ligandPart>
</feature>
<geneLocation type="chloroplast"/>
<keyword id="KW-0150">Chloroplast</keyword>
<keyword id="KW-0249">Electron transport</keyword>
<keyword id="KW-0349">Heme</keyword>
<keyword id="KW-0408">Iron</keyword>
<keyword id="KW-0472">Membrane</keyword>
<keyword id="KW-0479">Metal-binding</keyword>
<keyword id="KW-0602">Photosynthesis</keyword>
<keyword id="KW-0934">Plastid</keyword>
<keyword id="KW-0732">Signal</keyword>
<keyword id="KW-0793">Thylakoid</keyword>
<keyword id="KW-0812">Transmembrane</keyword>
<keyword id="KW-1133">Transmembrane helix</keyword>
<keyword id="KW-0813">Transport</keyword>
<sequence length="320" mass="35346">MQNRNTFSWVKEQMTRFISVSIMIYVITRTSIANAYPIFAQQGYENPREATGRIVCANCHLANKPVDIEVPQAVLPDTVFEAVVRIPYDKQLKQVLANGKKGSLNVGAVLILPEGFELAPPDRISPEMKEKMGNLAFQSYRPTKKNIIVIGPVPGQKYSEIVFPILSPDPATKKDVHFLKYPIYVGGNRGRGQIYPDGSKSNNTVYNATAAGVVSRILRKEKGGYEITIADASDGHQVVDIIPPGPELLVSEGESIKLDQPLTSNPNVGGFGQGDAEIVLQDPLRVQGLLFFLASVILAQIFLVLKKKQFEKVQLYEMNF</sequence>
<organism>
    <name type="scientific">Acorus calamus</name>
    <name type="common">Sweet flag</name>
    <dbReference type="NCBI Taxonomy" id="4465"/>
    <lineage>
        <taxon>Eukaryota</taxon>
        <taxon>Viridiplantae</taxon>
        <taxon>Streptophyta</taxon>
        <taxon>Embryophyta</taxon>
        <taxon>Tracheophyta</taxon>
        <taxon>Spermatophyta</taxon>
        <taxon>Magnoliopsida</taxon>
        <taxon>Liliopsida</taxon>
        <taxon>Acoraceae</taxon>
        <taxon>Acorus</taxon>
    </lineage>
</organism>
<evidence type="ECO:0000250" key="1"/>
<evidence type="ECO:0000255" key="2">
    <source>
        <dbReference type="HAMAP-Rule" id="MF_00610"/>
    </source>
</evidence>